<organism>
    <name type="scientific">Homo sapiens</name>
    <name type="common">Human</name>
    <dbReference type="NCBI Taxonomy" id="9606"/>
    <lineage>
        <taxon>Eukaryota</taxon>
        <taxon>Metazoa</taxon>
        <taxon>Chordata</taxon>
        <taxon>Craniata</taxon>
        <taxon>Vertebrata</taxon>
        <taxon>Euteleostomi</taxon>
        <taxon>Mammalia</taxon>
        <taxon>Eutheria</taxon>
        <taxon>Euarchontoglires</taxon>
        <taxon>Primates</taxon>
        <taxon>Haplorrhini</taxon>
        <taxon>Catarrhini</taxon>
        <taxon>Hominidae</taxon>
        <taxon>Homo</taxon>
    </lineage>
</organism>
<dbReference type="EC" id="3.6.5.-" evidence="8 34"/>
<dbReference type="EMBL" id="X90529">
    <property type="protein sequence ID" value="CAA62131.1"/>
    <property type="molecule type" value="mRNA"/>
</dbReference>
<dbReference type="EMBL" id="U41654">
    <property type="protein sequence ID" value="AAB63255.1"/>
    <property type="molecule type" value="mRNA"/>
</dbReference>
<dbReference type="EMBL" id="AL356000">
    <property type="status" value="NOT_ANNOTATED_CDS"/>
    <property type="molecule type" value="Genomic_DNA"/>
</dbReference>
<dbReference type="EMBL" id="AK313023">
    <property type="protein sequence ID" value="BAG35858.1"/>
    <property type="molecule type" value="mRNA"/>
</dbReference>
<dbReference type="EMBL" id="CH471071">
    <property type="protein sequence ID" value="EAW58653.1"/>
    <property type="molecule type" value="Genomic_DNA"/>
</dbReference>
<dbReference type="EMBL" id="BC006433">
    <property type="protein sequence ID" value="AAH06433.1"/>
    <property type="molecule type" value="mRNA"/>
</dbReference>
<dbReference type="EMBL" id="BC009990">
    <property type="protein sequence ID" value="AAH09990.1"/>
    <property type="molecule type" value="mRNA"/>
</dbReference>
<dbReference type="CCDS" id="CCDS6488.1"/>
<dbReference type="PIR" id="I38176">
    <property type="entry name" value="I38176"/>
</dbReference>
<dbReference type="RefSeq" id="NP_006561.1">
    <property type="nucleotide sequence ID" value="NM_006570.5"/>
</dbReference>
<dbReference type="PDB" id="5X6V">
    <property type="method" value="X-ray"/>
    <property type="resolution" value="2.02 A"/>
    <property type="chains" value="F=183-313"/>
</dbReference>
<dbReference type="PDB" id="6CES">
    <property type="method" value="EM"/>
    <property type="resolution" value="4.00 A"/>
    <property type="chains" value="A=1-313"/>
</dbReference>
<dbReference type="PDB" id="6EHR">
    <property type="method" value="X-ray"/>
    <property type="resolution" value="2.90 A"/>
    <property type="chains" value="F=183-313"/>
</dbReference>
<dbReference type="PDB" id="6NZD">
    <property type="method" value="EM"/>
    <property type="resolution" value="3.60 A"/>
    <property type="chains" value="F=1-313"/>
</dbReference>
<dbReference type="PDB" id="6S6A">
    <property type="method" value="X-ray"/>
    <property type="resolution" value="2.63 A"/>
    <property type="chains" value="A/B=1-313"/>
</dbReference>
<dbReference type="PDB" id="6S6D">
    <property type="method" value="X-ray"/>
    <property type="resolution" value="2.50 A"/>
    <property type="chains" value="A/B=1-313"/>
</dbReference>
<dbReference type="PDB" id="6SB0">
    <property type="method" value="EM"/>
    <property type="resolution" value="5.50 A"/>
    <property type="chains" value="C/I=1-313"/>
</dbReference>
<dbReference type="PDB" id="6SB2">
    <property type="method" value="EM"/>
    <property type="resolution" value="6.20 A"/>
    <property type="chains" value="C/I=1-313"/>
</dbReference>
<dbReference type="PDB" id="6U62">
    <property type="method" value="EM"/>
    <property type="resolution" value="3.18 A"/>
    <property type="chains" value="B=1-313"/>
</dbReference>
<dbReference type="PDB" id="6ULG">
    <property type="method" value="EM"/>
    <property type="resolution" value="3.31 A"/>
    <property type="chains" value="F=1-313"/>
</dbReference>
<dbReference type="PDB" id="6WJ2">
    <property type="method" value="EM"/>
    <property type="resolution" value="3.20 A"/>
    <property type="chains" value="F=1-313"/>
</dbReference>
<dbReference type="PDB" id="6WJ3">
    <property type="method" value="EM"/>
    <property type="resolution" value="3.90 A"/>
    <property type="chains" value="F=1-313"/>
</dbReference>
<dbReference type="PDB" id="7T3A">
    <property type="method" value="EM"/>
    <property type="resolution" value="4.00 A"/>
    <property type="chains" value="K=1-313"/>
</dbReference>
<dbReference type="PDB" id="7T3B">
    <property type="method" value="EM"/>
    <property type="resolution" value="3.90 A"/>
    <property type="chains" value="D=1-313"/>
</dbReference>
<dbReference type="PDB" id="7T3C">
    <property type="method" value="EM"/>
    <property type="resolution" value="4.00 A"/>
    <property type="chains" value="D/K=1-313"/>
</dbReference>
<dbReference type="PDB" id="7UX2">
    <property type="method" value="EM"/>
    <property type="resolution" value="2.90 A"/>
    <property type="chains" value="B/I=1-313"/>
</dbReference>
<dbReference type="PDB" id="7UXC">
    <property type="method" value="EM"/>
    <property type="resolution" value="3.20 A"/>
    <property type="chains" value="D/K=1-313"/>
</dbReference>
<dbReference type="PDB" id="7UXH">
    <property type="method" value="EM"/>
    <property type="resolution" value="3.20 A"/>
    <property type="chains" value="F/M/V/c=1-313"/>
</dbReference>
<dbReference type="PDB" id="8DHB">
    <property type="method" value="EM"/>
    <property type="resolution" value="3.53 A"/>
    <property type="chains" value="B=1-313"/>
</dbReference>
<dbReference type="PDBsum" id="5X6V"/>
<dbReference type="PDBsum" id="6CES"/>
<dbReference type="PDBsum" id="6EHR"/>
<dbReference type="PDBsum" id="6NZD"/>
<dbReference type="PDBsum" id="6S6A"/>
<dbReference type="PDBsum" id="6S6D"/>
<dbReference type="PDBsum" id="6SB0"/>
<dbReference type="PDBsum" id="6SB2"/>
<dbReference type="PDBsum" id="6U62"/>
<dbReference type="PDBsum" id="6ULG"/>
<dbReference type="PDBsum" id="6WJ2"/>
<dbReference type="PDBsum" id="6WJ3"/>
<dbReference type="PDBsum" id="7T3A"/>
<dbReference type="PDBsum" id="7T3B"/>
<dbReference type="PDBsum" id="7T3C"/>
<dbReference type="PDBsum" id="7UX2"/>
<dbReference type="PDBsum" id="7UXC"/>
<dbReference type="PDBsum" id="7UXH"/>
<dbReference type="PDBsum" id="8DHB"/>
<dbReference type="EMDB" id="EMD-0554"/>
<dbReference type="EMDB" id="EMD-10132"/>
<dbReference type="EMDB" id="EMD-10133"/>
<dbReference type="EMDB" id="EMD-20660"/>
<dbReference type="EMDB" id="EMD-20814"/>
<dbReference type="EMDB" id="EMD-21686"/>
<dbReference type="EMDB" id="EMD-21687"/>
<dbReference type="EMDB" id="EMD-25652"/>
<dbReference type="EMDB" id="EMD-25653"/>
<dbReference type="EMDB" id="EMD-25654"/>
<dbReference type="EMDB" id="EMD-26846"/>
<dbReference type="EMDB" id="EMD-26857"/>
<dbReference type="EMDB" id="EMD-26861"/>
<dbReference type="EMDB" id="EMD-27435"/>
<dbReference type="EMDB" id="EMD-7464"/>
<dbReference type="SMR" id="Q7L523"/>
<dbReference type="BioGRID" id="115912">
    <property type="interactions" value="70"/>
</dbReference>
<dbReference type="ComplexPortal" id="CPX-2513">
    <property type="entry name" value="RAG guanosine triphosphatase complex, RAGA-RAGD variant"/>
</dbReference>
<dbReference type="ComplexPortal" id="CPX-2542">
    <property type="entry name" value="RAG guanosine triphosphatase complex, RAGA-RAGC variant"/>
</dbReference>
<dbReference type="CORUM" id="Q7L523"/>
<dbReference type="DIP" id="DIP-37516N"/>
<dbReference type="FunCoup" id="Q7L523">
    <property type="interactions" value="3160"/>
</dbReference>
<dbReference type="IntAct" id="Q7L523">
    <property type="interactions" value="21"/>
</dbReference>
<dbReference type="STRING" id="9606.ENSP00000369899"/>
<dbReference type="iPTMnet" id="Q7L523"/>
<dbReference type="PhosphoSitePlus" id="Q7L523"/>
<dbReference type="SwissPalm" id="Q7L523"/>
<dbReference type="BioMuta" id="RRAGA"/>
<dbReference type="DMDM" id="74759007"/>
<dbReference type="jPOST" id="Q7L523"/>
<dbReference type="MassIVE" id="Q7L523"/>
<dbReference type="PaxDb" id="9606-ENSP00000369899"/>
<dbReference type="PeptideAtlas" id="Q7L523"/>
<dbReference type="ProteomicsDB" id="68791"/>
<dbReference type="Pumba" id="Q7L523"/>
<dbReference type="Antibodypedia" id="42790">
    <property type="antibodies" value="165 antibodies from 25 providers"/>
</dbReference>
<dbReference type="DNASU" id="10670"/>
<dbReference type="Ensembl" id="ENST00000380527.3">
    <property type="protein sequence ID" value="ENSP00000369899.1"/>
    <property type="gene ID" value="ENSG00000155876.6"/>
</dbReference>
<dbReference type="GeneID" id="10670"/>
<dbReference type="KEGG" id="hsa:10670"/>
<dbReference type="MANE-Select" id="ENST00000380527.3">
    <property type="protein sequence ID" value="ENSP00000369899.1"/>
    <property type="RefSeq nucleotide sequence ID" value="NM_006570.5"/>
    <property type="RefSeq protein sequence ID" value="NP_006561.1"/>
</dbReference>
<dbReference type="UCSC" id="uc003znj.4">
    <property type="organism name" value="human"/>
</dbReference>
<dbReference type="AGR" id="HGNC:16963"/>
<dbReference type="CTD" id="10670"/>
<dbReference type="DisGeNET" id="10670"/>
<dbReference type="GeneCards" id="RRAGA"/>
<dbReference type="HGNC" id="HGNC:16963">
    <property type="gene designation" value="RRAGA"/>
</dbReference>
<dbReference type="HPA" id="ENSG00000155876">
    <property type="expression patterns" value="Low tissue specificity"/>
</dbReference>
<dbReference type="MalaCards" id="RRAGA"/>
<dbReference type="MIM" id="612194">
    <property type="type" value="gene"/>
</dbReference>
<dbReference type="neXtProt" id="NX_Q7L523"/>
<dbReference type="OpenTargets" id="ENSG00000155876"/>
<dbReference type="PharmGKB" id="PA134980509"/>
<dbReference type="VEuPathDB" id="HostDB:ENSG00000155876"/>
<dbReference type="eggNOG" id="KOG3886">
    <property type="taxonomic scope" value="Eukaryota"/>
</dbReference>
<dbReference type="GeneTree" id="ENSGT00950000183031"/>
<dbReference type="HOGENOM" id="CLU_044099_1_0_1"/>
<dbReference type="InParanoid" id="Q7L523"/>
<dbReference type="OMA" id="QQKDHIF"/>
<dbReference type="OrthoDB" id="10020193at2759"/>
<dbReference type="PAN-GO" id="Q7L523">
    <property type="GO annotations" value="8 GO annotations based on evolutionary models"/>
</dbReference>
<dbReference type="PhylomeDB" id="Q7L523"/>
<dbReference type="TreeFam" id="TF300616"/>
<dbReference type="PathwayCommons" id="Q7L523"/>
<dbReference type="Reactome" id="R-HSA-1632852">
    <property type="pathway name" value="Macroautophagy"/>
</dbReference>
<dbReference type="Reactome" id="R-HSA-165159">
    <property type="pathway name" value="MTOR signalling"/>
</dbReference>
<dbReference type="Reactome" id="R-HSA-166208">
    <property type="pathway name" value="mTORC1-mediated signalling"/>
</dbReference>
<dbReference type="Reactome" id="R-HSA-380972">
    <property type="pathway name" value="Energy dependent regulation of mTOR by LKB1-AMPK"/>
</dbReference>
<dbReference type="Reactome" id="R-HSA-5628897">
    <property type="pathway name" value="TP53 Regulates Metabolic Genes"/>
</dbReference>
<dbReference type="Reactome" id="R-HSA-8866654">
    <property type="pathway name" value="E3 ubiquitin ligases ubiquitinate target proteins"/>
</dbReference>
<dbReference type="Reactome" id="R-HSA-8943724">
    <property type="pathway name" value="Regulation of PTEN gene transcription"/>
</dbReference>
<dbReference type="Reactome" id="R-HSA-9639288">
    <property type="pathway name" value="Amino acids regulate mTORC1"/>
</dbReference>
<dbReference type="SignaLink" id="Q7L523"/>
<dbReference type="SIGNOR" id="Q7L523"/>
<dbReference type="BioGRID-ORCS" id="10670">
    <property type="hits" value="340 hits in 1177 CRISPR screens"/>
</dbReference>
<dbReference type="ChiTaRS" id="RRAGA">
    <property type="organism name" value="human"/>
</dbReference>
<dbReference type="GeneWiki" id="RRAGA"/>
<dbReference type="GenomeRNAi" id="10670"/>
<dbReference type="Pharos" id="Q7L523">
    <property type="development level" value="Tbio"/>
</dbReference>
<dbReference type="PRO" id="PR:Q7L523"/>
<dbReference type="Proteomes" id="UP000005640">
    <property type="component" value="Chromosome 9"/>
</dbReference>
<dbReference type="RNAct" id="Q7L523">
    <property type="molecule type" value="protein"/>
</dbReference>
<dbReference type="Bgee" id="ENSG00000155876">
    <property type="expression patterns" value="Expressed in paraflocculus and 207 other cell types or tissues"/>
</dbReference>
<dbReference type="GO" id="GO:0005737">
    <property type="term" value="C:cytoplasm"/>
    <property type="evidence" value="ECO:0000314"/>
    <property type="project" value="UniProtKB"/>
</dbReference>
<dbReference type="GO" id="GO:0005829">
    <property type="term" value="C:cytosol"/>
    <property type="evidence" value="ECO:0000304"/>
    <property type="project" value="Reactome"/>
</dbReference>
<dbReference type="GO" id="GO:1990877">
    <property type="term" value="C:FNIP-folliculin RagC/D GAP"/>
    <property type="evidence" value="ECO:0000314"/>
    <property type="project" value="UniProtKB"/>
</dbReference>
<dbReference type="GO" id="GO:1990131">
    <property type="term" value="C:Gtr1-Gtr2 GTPase complex"/>
    <property type="evidence" value="ECO:0000318"/>
    <property type="project" value="GO_Central"/>
</dbReference>
<dbReference type="GO" id="GO:0005765">
    <property type="term" value="C:lysosomal membrane"/>
    <property type="evidence" value="ECO:0000314"/>
    <property type="project" value="UniProtKB"/>
</dbReference>
<dbReference type="GO" id="GO:0005764">
    <property type="term" value="C:lysosome"/>
    <property type="evidence" value="ECO:0000314"/>
    <property type="project" value="UniProtKB"/>
</dbReference>
<dbReference type="GO" id="GO:0005654">
    <property type="term" value="C:nucleoplasm"/>
    <property type="evidence" value="ECO:0000314"/>
    <property type="project" value="UniProtKB"/>
</dbReference>
<dbReference type="GO" id="GO:0005634">
    <property type="term" value="C:nucleus"/>
    <property type="evidence" value="ECO:0000314"/>
    <property type="project" value="UniProtKB"/>
</dbReference>
<dbReference type="GO" id="GO:0005525">
    <property type="term" value="F:GTP binding"/>
    <property type="evidence" value="ECO:0000314"/>
    <property type="project" value="UniProtKB"/>
</dbReference>
<dbReference type="GO" id="GO:0003924">
    <property type="term" value="F:GTPase activity"/>
    <property type="evidence" value="ECO:0000314"/>
    <property type="project" value="UniProtKB"/>
</dbReference>
<dbReference type="GO" id="GO:0051219">
    <property type="term" value="F:phosphoprotein binding"/>
    <property type="evidence" value="ECO:0000314"/>
    <property type="project" value="UniProtKB"/>
</dbReference>
<dbReference type="GO" id="GO:0046982">
    <property type="term" value="F:protein heterodimerization activity"/>
    <property type="evidence" value="ECO:0000353"/>
    <property type="project" value="UniProtKB"/>
</dbReference>
<dbReference type="GO" id="GO:0042803">
    <property type="term" value="F:protein homodimerization activity"/>
    <property type="evidence" value="ECO:0000314"/>
    <property type="project" value="UniProtKB"/>
</dbReference>
<dbReference type="GO" id="GO:0043495">
    <property type="term" value="F:protein-membrane adaptor activity"/>
    <property type="evidence" value="ECO:0000314"/>
    <property type="project" value="UniProtKB"/>
</dbReference>
<dbReference type="GO" id="GO:0031625">
    <property type="term" value="F:ubiquitin protein ligase binding"/>
    <property type="evidence" value="ECO:0000353"/>
    <property type="project" value="UniProtKB"/>
</dbReference>
<dbReference type="GO" id="GO:0006915">
    <property type="term" value="P:apoptotic process"/>
    <property type="evidence" value="ECO:0007669"/>
    <property type="project" value="UniProtKB-KW"/>
</dbReference>
<dbReference type="GO" id="GO:0034198">
    <property type="term" value="P:cellular response to amino acid starvation"/>
    <property type="evidence" value="ECO:0000315"/>
    <property type="project" value="UniProtKB"/>
</dbReference>
<dbReference type="GO" id="GO:0071230">
    <property type="term" value="P:cellular response to amino acid stimulus"/>
    <property type="evidence" value="ECO:0000315"/>
    <property type="project" value="UniProtKB"/>
</dbReference>
<dbReference type="GO" id="GO:0031669">
    <property type="term" value="P:cellular response to nutrient levels"/>
    <property type="evidence" value="ECO:0000314"/>
    <property type="project" value="UniProt"/>
</dbReference>
<dbReference type="GO" id="GO:0009267">
    <property type="term" value="P:cellular response to starvation"/>
    <property type="evidence" value="ECO:0000318"/>
    <property type="project" value="GO_Central"/>
</dbReference>
<dbReference type="GO" id="GO:0042593">
    <property type="term" value="P:glucose homeostasis"/>
    <property type="evidence" value="ECO:0007669"/>
    <property type="project" value="Ensembl"/>
</dbReference>
<dbReference type="GO" id="GO:0035556">
    <property type="term" value="P:intracellular signal transduction"/>
    <property type="evidence" value="ECO:0000314"/>
    <property type="project" value="UniProtKB"/>
</dbReference>
<dbReference type="GO" id="GO:0010507">
    <property type="term" value="P:negative regulation of autophagy"/>
    <property type="evidence" value="ECO:0000315"/>
    <property type="project" value="UniProtKB"/>
</dbReference>
<dbReference type="GO" id="GO:0032008">
    <property type="term" value="P:positive regulation of TOR signaling"/>
    <property type="evidence" value="ECO:0000303"/>
    <property type="project" value="UniProtKB"/>
</dbReference>
<dbReference type="GO" id="GO:1904263">
    <property type="term" value="P:positive regulation of TORC1 signaling"/>
    <property type="evidence" value="ECO:0000314"/>
    <property type="project" value="UniProtKB"/>
</dbReference>
<dbReference type="GO" id="GO:0008104">
    <property type="term" value="P:protein localization"/>
    <property type="evidence" value="ECO:0000315"/>
    <property type="project" value="UniProtKB"/>
</dbReference>
<dbReference type="GO" id="GO:0061462">
    <property type="term" value="P:protein localization to lysosome"/>
    <property type="evidence" value="ECO:0000314"/>
    <property type="project" value="UniProt"/>
</dbReference>
<dbReference type="GO" id="GO:0072657">
    <property type="term" value="P:protein localization to membrane"/>
    <property type="evidence" value="ECO:0000314"/>
    <property type="project" value="UniProtKB"/>
</dbReference>
<dbReference type="GO" id="GO:0033209">
    <property type="term" value="P:tumor necrosis factor-mediated signaling pathway"/>
    <property type="evidence" value="ECO:0000314"/>
    <property type="project" value="UniProtKB"/>
</dbReference>
<dbReference type="CDD" id="cd11384">
    <property type="entry name" value="RagA_like"/>
    <property type="match status" value="1"/>
</dbReference>
<dbReference type="FunFam" id="3.30.450.190:FF:000002">
    <property type="entry name" value="Ras-related GTP-binding protein A"/>
    <property type="match status" value="1"/>
</dbReference>
<dbReference type="FunFam" id="3.40.50.300:FF:000276">
    <property type="entry name" value="Ras-related GTP-binding protein A"/>
    <property type="match status" value="1"/>
</dbReference>
<dbReference type="Gene3D" id="3.30.450.190">
    <property type="match status" value="1"/>
</dbReference>
<dbReference type="Gene3D" id="3.40.50.300">
    <property type="entry name" value="P-loop containing nucleotide triphosphate hydrolases"/>
    <property type="match status" value="1"/>
</dbReference>
<dbReference type="InterPro" id="IPR006762">
    <property type="entry name" value="Gtr1_RagA"/>
</dbReference>
<dbReference type="InterPro" id="IPR027417">
    <property type="entry name" value="P-loop_NTPase"/>
</dbReference>
<dbReference type="InterPro" id="IPR039397">
    <property type="entry name" value="RagA/B"/>
</dbReference>
<dbReference type="PANTHER" id="PTHR11259">
    <property type="entry name" value="RAS-RELATED GTP BINDING RAG/GTR YEAST"/>
    <property type="match status" value="1"/>
</dbReference>
<dbReference type="PANTHER" id="PTHR11259:SF7">
    <property type="entry name" value="RAS-RELATED GTP-BINDING PROTEIN A"/>
    <property type="match status" value="1"/>
</dbReference>
<dbReference type="Pfam" id="PF04670">
    <property type="entry name" value="Gtr1_RagA"/>
    <property type="match status" value="1"/>
</dbReference>
<dbReference type="SUPFAM" id="SSF52540">
    <property type="entry name" value="P-loop containing nucleoside triphosphate hydrolases"/>
    <property type="match status" value="1"/>
</dbReference>
<sequence length="313" mass="36566">MPNTAMKKKVLLMGKSGSGKTSMRSIIFANYIARDTRRLGATIDVEHSHVRFLGNLVLNLWDCGGQDTFMENYFTSQRDNIFRNVEVLIYVFDVESRELEKDMHYYQSCLEAILQNSPDAKIFCLVHKMDLVQEDQRDLIFKEREEDLRRLSRPLECACFRTSIWDETLYKAWSSIVYQLIPNVQQLEMNLRNFAQIIEADEVLLFERATFLVISHYQCKEQRDVHRFEKISNIIKQFKLSCSKLAASFQSMEVRNSNFAAFIDIFTSNTYVMVVMSDPSIPSAATLINIRNARKHFEKLERVDGPKHSLLMR</sequence>
<comment type="function">
    <text evidence="5 9 13 18 19 22 27 28 29">Guanine nucleotide-binding protein that plays a crucial role in the cellular response to amino acid availability through regulation of the mTORC1 signaling cascade (PubMed:20381137, PubMed:24095279, PubMed:25936802, PubMed:31601708, PubMed:31601764, PubMed:38103557). Forms heterodimeric Rag complexes with RagC/RRAGC or RagD/RRAGD and cycles between an inactive GDP-bound and an active GTP-bound form: RagA/RRAGA is in its active form when GTP-bound RagA/RRAGA forms a complex with GDP-bound RagC/RRAGC (or RagD/RRAGD) and in an inactive form when GDP-bound RagA/RRAGA heterodimerizes with GTP-bound RagC/RRAGC (or RagD/RRAGD) (PubMed:20381137, PubMed:24095279, PubMed:25936802, PubMed:31601708, PubMed:31601764, PubMed:32868926). In its GTP-bound active form, promotes the recruitment of mTORC1 to the lysosomes and its subsequent activation by the GTPase RHEB (PubMed:20381137, PubMed:25936802, PubMed:31601708, PubMed:31601764). Involved in the RCC1/Ran-GTPase pathway (PubMed:9394008). May play a direct role in a TNF-alpha signaling pathway leading to induction of cell death (PubMed:8995684).</text>
</comment>
<comment type="function">
    <text evidence="28">(Microbial infection) May alternatively act as a cellular target for adenovirus E3-14.7K, an inhibitor of TNF-alpha functions, thereby affecting cell death.</text>
</comment>
<comment type="catalytic activity">
    <reaction evidence="22 34">
        <text>GTP + H2O = GDP + phosphate + H(+)</text>
        <dbReference type="Rhea" id="RHEA:19669"/>
        <dbReference type="ChEBI" id="CHEBI:15377"/>
        <dbReference type="ChEBI" id="CHEBI:15378"/>
        <dbReference type="ChEBI" id="CHEBI:37565"/>
        <dbReference type="ChEBI" id="CHEBI:43474"/>
        <dbReference type="ChEBI" id="CHEBI:58189"/>
    </reaction>
    <physiologicalReaction direction="left-to-right" evidence="34">
        <dbReference type="Rhea" id="RHEA:19670"/>
    </physiologicalReaction>
</comment>
<comment type="activity regulation">
    <text evidence="7 8 16">The activation of GTP-binding proteins is generally mediated by a guanine exchange factor (GEF), while inactivation through hydrolysis of bound GTP is catalyzed by a GTPase activating protein (GAP) (PubMed:22980980, PubMed:23723238). The Ragulator complex functions as a GEF and promotes the active GTP-bound form (PubMed:22980980). The GATOR1 complex functions as a GAP and stimulates RRAGA GTPase activity to turn it into its inactive GDP-bound form, preventing mTORC1 recruitment and activation (PubMed:23723238, PubMed:29590090).</text>
</comment>
<comment type="subunit">
    <text evidence="1 2 3 4 5 6 10 11 12 13 15 17 18 19 20 21 22 25 26 27">Can occur as a homodimer or as a heterodimer with RRAGC or RRAGD in a sequence-independent manner; heterodimerization stabilizes proteins of the heterodimer (PubMed:11073942, PubMed:20381137, PubMed:31601708, PubMed:31601764, PubMed:32868926). The GTP-bound form of RRAGA (in complex with the GDP-bound form of RRAGC or RRAGD) interacts with RPTOR, thereby promoting recruitment of mTORC1 to the lysosomes (PubMed:18497260, PubMed:31601708, PubMed:31601764). The Rag heterodimer interacts with SLC38A9; the probable amino acid sensor (PubMed:25561175, PubMed:25567906, PubMed:32868926). The Rag heterodimer interacts with the Ragulator complex (PubMed:29158492, PubMed:32868926). The GTP-bound form of RRAGA interacts with NOL8 (PubMed:14660641). Component of the lysosomal folliculin complex (LFC), composed of FLCN, FNIP1 (or FNIP2), RagA/RRAGA or RagB/RRAGB GDP-bound, RagC/RRAGC or RagD/RRAGD GTP-bound, and Ragulator (PubMed:31672913, PubMed:31704029). Interacts with MiT/TFE factors MITF, TFEB and TFE3; promoting their localization to lysosomal membranes (PubMed:36608670, PubMed:36697823). Interacts with SH3BP4; the interaction with this negative regulator is most probably direct, preferentially occurs with the inactive GDP-bound form of RRAGA and is negatively regulated by amino acids (PubMed:22575674). Interacts (polyubiquitinated) with TSC2 (PubMed:25936802). Interacts with SESN1, SESN2 and SESN3 (PubMed:25259925). Interacts with PIP4P1 (By similarity). Interacts with GPR137B (PubMed:31036939). Interacts with WDR83; this interaction regulates the spatiotemporal localization of mTORC1 to the lysosomal surface (PubMed:38103557).</text>
</comment>
<comment type="subunit">
    <text evidence="28">(Microbial infection) Interacts with adenovirus E3 14.7 kDa protein.</text>
</comment>
<comment type="interaction">
    <interactant intactId="EBI-752376">
        <id>Q7L523</id>
    </interactant>
    <interactant intactId="EBI-1176455">
        <id>P63172</id>
        <label>DYNLT1</label>
    </interactant>
    <organismsDiffer>false</organismsDiffer>
    <experiments>3</experiments>
</comment>
<comment type="interaction">
    <interactant intactId="EBI-752376">
        <id>Q7L523</id>
    </interactant>
    <interactant intactId="EBI-715385">
        <id>Q6IAA8</id>
        <label>LAMTOR1</label>
    </interactant>
    <organismsDiffer>false</organismsDiffer>
    <experiments>15</experiments>
</comment>
<comment type="interaction">
    <interactant intactId="EBI-752376">
        <id>Q7L523</id>
    </interactant>
    <interactant intactId="EBI-752390">
        <id>Q9HB90</id>
        <label>RRAGC</label>
    </interactant>
    <organismsDiffer>false</organismsDiffer>
    <experiments>44</experiments>
</comment>
<comment type="interaction">
    <interactant intactId="EBI-752376">
        <id>Q7L523</id>
    </interactant>
    <interactant intactId="EBI-992949">
        <id>Q9NQL2</id>
        <label>RRAGD</label>
    </interactant>
    <organismsDiffer>false</organismsDiffer>
    <experiments>10</experiments>
</comment>
<comment type="interaction">
    <interactant intactId="EBI-752376">
        <id>Q7L523</id>
    </interactant>
    <interactant intactId="EBI-9978316">
        <id>Q8NBW4</id>
        <label>SLC38A9</label>
    </interactant>
    <organismsDiffer>false</organismsDiffer>
    <experiments>17</experiments>
</comment>
<comment type="subcellular location">
    <subcellularLocation>
        <location evidence="28 29">Cytoplasm</location>
    </subcellularLocation>
    <subcellularLocation>
        <location evidence="28 29">Nucleus</location>
    </subcellularLocation>
    <subcellularLocation>
        <location evidence="5 14 15 17">Lysosome membrane</location>
    </subcellularLocation>
    <text evidence="5 14 15 28 29">Predominantly cytoplasmic (PubMed:8995684, PubMed:9394008). Recruited to the lysosome surface by the Ragulator complex (PubMed:20381137, PubMed:28935770, PubMed:29158492). May shuttle between the cytoplasm and nucleus, depending on the bound nucleotide state (PubMed:8995684, PubMed:9394008). Colocalizes in vivo with adenovirus E3-14.7K mainly to the cytoplasm especially near the nuclear membrane and in discrete foci on or near the plasma membrane (PubMed:8995684).</text>
</comment>
<comment type="tissue specificity">
    <text evidence="28">Ubiquitously expressed with highest levels of expression in skeletal muscle, heart, and brain.</text>
</comment>
<comment type="PTM">
    <text evidence="13">Polybiquitinated via 'Lys-63'-linked polyubiquitination by RNF152 in response to amino acid starvation: polyubiquitination of the GDP-bound inactive form by RNF152 promotes RRAGA inactivation and interaction with the GATOR1 complex (PubMed:25936802). This does not affect RRAGA degradation (PubMed:25936802).</text>
</comment>
<comment type="similarity">
    <text evidence="33">Belongs to the GTR/RAG GTP-binding protein family.</text>
</comment>
<evidence type="ECO:0000250" key="1">
    <source>
        <dbReference type="UniProtKB" id="Q80X95"/>
    </source>
</evidence>
<evidence type="ECO:0000269" key="2">
    <source>
    </source>
</evidence>
<evidence type="ECO:0000269" key="3">
    <source>
    </source>
</evidence>
<evidence type="ECO:0000269" key="4">
    <source>
    </source>
</evidence>
<evidence type="ECO:0000269" key="5">
    <source>
    </source>
</evidence>
<evidence type="ECO:0000269" key="6">
    <source>
    </source>
</evidence>
<evidence type="ECO:0000269" key="7">
    <source>
    </source>
</evidence>
<evidence type="ECO:0000269" key="8">
    <source>
    </source>
</evidence>
<evidence type="ECO:0000269" key="9">
    <source>
    </source>
</evidence>
<evidence type="ECO:0000269" key="10">
    <source>
    </source>
</evidence>
<evidence type="ECO:0000269" key="11">
    <source>
    </source>
</evidence>
<evidence type="ECO:0000269" key="12">
    <source>
    </source>
</evidence>
<evidence type="ECO:0000269" key="13">
    <source>
    </source>
</evidence>
<evidence type="ECO:0000269" key="14">
    <source>
    </source>
</evidence>
<evidence type="ECO:0000269" key="15">
    <source>
    </source>
</evidence>
<evidence type="ECO:0000269" key="16">
    <source>
    </source>
</evidence>
<evidence type="ECO:0000269" key="17">
    <source>
    </source>
</evidence>
<evidence type="ECO:0000269" key="18">
    <source>
    </source>
</evidence>
<evidence type="ECO:0000269" key="19">
    <source>
    </source>
</evidence>
<evidence type="ECO:0000269" key="20">
    <source>
    </source>
</evidence>
<evidence type="ECO:0000269" key="21">
    <source>
    </source>
</evidence>
<evidence type="ECO:0000269" key="22">
    <source>
    </source>
</evidence>
<evidence type="ECO:0000269" key="23">
    <source>
    </source>
</evidence>
<evidence type="ECO:0000269" key="24">
    <source>
    </source>
</evidence>
<evidence type="ECO:0000269" key="25">
    <source>
    </source>
</evidence>
<evidence type="ECO:0000269" key="26">
    <source>
    </source>
</evidence>
<evidence type="ECO:0000269" key="27">
    <source>
    </source>
</evidence>
<evidence type="ECO:0000269" key="28">
    <source>
    </source>
</evidence>
<evidence type="ECO:0000269" key="29">
    <source>
    </source>
</evidence>
<evidence type="ECO:0000303" key="30">
    <source>
    </source>
</evidence>
<evidence type="ECO:0000303" key="31">
    <source>
    </source>
</evidence>
<evidence type="ECO:0000303" key="32">
    <source>
    </source>
</evidence>
<evidence type="ECO:0000305" key="33"/>
<evidence type="ECO:0000305" key="34">
    <source>
    </source>
</evidence>
<evidence type="ECO:0000312" key="35">
    <source>
        <dbReference type="EMBL" id="AAB63255.1"/>
    </source>
</evidence>
<evidence type="ECO:0000312" key="36">
    <source>
        <dbReference type="EMBL" id="AAH06433.1"/>
    </source>
</evidence>
<evidence type="ECO:0000312" key="37">
    <source>
        <dbReference type="EMBL" id="AAH09990.1"/>
    </source>
</evidence>
<evidence type="ECO:0000312" key="38">
    <source>
        <dbReference type="EMBL" id="AL356000"/>
    </source>
</evidence>
<evidence type="ECO:0000312" key="39">
    <source>
        <dbReference type="EMBL" id="CAA62131.1"/>
    </source>
</evidence>
<evidence type="ECO:0000312" key="40">
    <source>
        <dbReference type="HGNC" id="HGNC:16963"/>
    </source>
</evidence>
<evidence type="ECO:0007744" key="41">
    <source>
        <dbReference type="PDB" id="5X6V"/>
    </source>
</evidence>
<evidence type="ECO:0007744" key="42">
    <source>
        <dbReference type="PDB" id="6CES"/>
    </source>
</evidence>
<evidence type="ECO:0007744" key="43">
    <source>
        <dbReference type="PDB" id="6EHR"/>
    </source>
</evidence>
<evidence type="ECO:0007744" key="44">
    <source>
        <dbReference type="PDB" id="6NZD"/>
    </source>
</evidence>
<evidence type="ECO:0007744" key="45">
    <source>
        <dbReference type="PDB" id="6SB0"/>
    </source>
</evidence>
<evidence type="ECO:0007744" key="46">
    <source>
        <dbReference type="PDB" id="6SB2"/>
    </source>
</evidence>
<evidence type="ECO:0007744" key="47">
    <source>
        <dbReference type="PDB" id="6U62"/>
    </source>
</evidence>
<evidence type="ECO:0007744" key="48">
    <source>
        <dbReference type="PDB" id="6ULG"/>
    </source>
</evidence>
<evidence type="ECO:0007744" key="49">
    <source>
        <dbReference type="PDB" id="6WJ2"/>
    </source>
</evidence>
<evidence type="ECO:0007744" key="50">
    <source>
        <dbReference type="PDB" id="6WJ3"/>
    </source>
</evidence>
<evidence type="ECO:0007744" key="51">
    <source>
        <dbReference type="PDB" id="7T3A"/>
    </source>
</evidence>
<evidence type="ECO:0007744" key="52">
    <source>
        <dbReference type="PDB" id="7T3B"/>
    </source>
</evidence>
<evidence type="ECO:0007744" key="53">
    <source>
        <dbReference type="PDB" id="7T3C"/>
    </source>
</evidence>
<evidence type="ECO:0007744" key="54">
    <source>
        <dbReference type="PDB" id="7UX2"/>
    </source>
</evidence>
<evidence type="ECO:0007744" key="55">
    <source>
        <dbReference type="PDB" id="7UXC"/>
    </source>
</evidence>
<evidence type="ECO:0007744" key="56">
    <source>
        <dbReference type="PDB" id="7UXH"/>
    </source>
</evidence>
<evidence type="ECO:0007744" key="57">
    <source>
        <dbReference type="PDB" id="8DHB"/>
    </source>
</evidence>
<evidence type="ECO:0007744" key="58">
    <source>
    </source>
</evidence>
<evidence type="ECO:0007829" key="59">
    <source>
        <dbReference type="PDB" id="5X6V"/>
    </source>
</evidence>
<evidence type="ECO:0007829" key="60">
    <source>
        <dbReference type="PDB" id="6S6D"/>
    </source>
</evidence>
<evidence type="ECO:0007829" key="61">
    <source>
        <dbReference type="PDB" id="6ULG"/>
    </source>
</evidence>
<name>RRAGA_HUMAN</name>
<gene>
    <name evidence="40" type="primary">RRAGA</name>
</gene>
<protein>
    <recommendedName>
        <fullName evidence="33">Ras-related GTP-binding protein A</fullName>
        <shortName evidence="30">Rag A</shortName>
        <shortName evidence="31">RagA</shortName>
        <ecNumber evidence="8 34">3.6.5.-</ecNumber>
    </recommendedName>
    <alternativeName>
        <fullName evidence="32">Adenovirus E3 14.7 kDa-interacting protein 1</fullName>
    </alternativeName>
    <alternativeName>
        <fullName evidence="32">FIP-1</fullName>
    </alternativeName>
</protein>
<accession>Q7L523</accession>
<accession>B2R7L1</accession>
<accession>O00290</accession>
<accession>Q15347</accession>
<feature type="chain" id="PRO_0000239945" description="Ras-related GTP-binding protein A">
    <location>
        <begin position="1"/>
        <end position="313"/>
    </location>
</feature>
<feature type="binding site" evidence="18 26 47 54 55 56">
    <location>
        <position position="16"/>
    </location>
    <ligand>
        <name>GTP</name>
        <dbReference type="ChEBI" id="CHEBI:37565"/>
    </ligand>
</feature>
<feature type="binding site" evidence="22 23 24 49 50 53 57">
    <location>
        <position position="17"/>
    </location>
    <ligand>
        <name>GDP</name>
        <dbReference type="ChEBI" id="CHEBI:58189"/>
    </ligand>
</feature>
<feature type="binding site" evidence="18 26 47 54 55 56">
    <location>
        <position position="17"/>
    </location>
    <ligand>
        <name>GTP</name>
        <dbReference type="ChEBI" id="CHEBI:37565"/>
    </ligand>
</feature>
<feature type="binding site" evidence="23 24 52 53 57">
    <location>
        <position position="18"/>
    </location>
    <ligand>
        <name>GDP</name>
        <dbReference type="ChEBI" id="CHEBI:58189"/>
    </ligand>
</feature>
<feature type="binding site" evidence="21 22 24 48 49 50 57">
    <location>
        <position position="19"/>
    </location>
    <ligand>
        <name>GDP</name>
        <dbReference type="ChEBI" id="CHEBI:58189"/>
    </ligand>
</feature>
<feature type="binding site" evidence="19 26 45 46 54 55 56">
    <location>
        <position position="19"/>
    </location>
    <ligand>
        <name>GTP</name>
        <dbReference type="ChEBI" id="CHEBI:37565"/>
    </ligand>
</feature>
<feature type="binding site" evidence="21 22 23 24 48 49 50 52 53 57">
    <location>
        <position position="20"/>
    </location>
    <ligand>
        <name>GDP</name>
        <dbReference type="ChEBI" id="CHEBI:58189"/>
    </ligand>
</feature>
<feature type="binding site" evidence="18 19 26 45 46 47 54 55 56">
    <location>
        <position position="20"/>
    </location>
    <ligand>
        <name>GTP</name>
        <dbReference type="ChEBI" id="CHEBI:37565"/>
    </ligand>
</feature>
<feature type="binding site" evidence="20 21 22 23 24 44 48 49 50 52 53 57">
    <location>
        <position position="21"/>
    </location>
    <ligand>
        <name>GDP</name>
        <dbReference type="ChEBI" id="CHEBI:58189"/>
    </ligand>
</feature>
<feature type="binding site" evidence="19 26 45 46 54 55 56">
    <location>
        <position position="21"/>
    </location>
    <ligand>
        <name>GTP</name>
        <dbReference type="ChEBI" id="CHEBI:37565"/>
    </ligand>
</feature>
<feature type="binding site" evidence="21 22 24 48 49 57">
    <location>
        <position position="22"/>
    </location>
    <ligand>
        <name>GDP</name>
        <dbReference type="ChEBI" id="CHEBI:58189"/>
    </ligand>
</feature>
<feature type="binding site" evidence="18 19 45 46 47">
    <location>
        <position position="22"/>
    </location>
    <ligand>
        <name>GTP</name>
        <dbReference type="ChEBI" id="CHEBI:37565"/>
    </ligand>
</feature>
<feature type="binding site" evidence="23 52 53">
    <location>
        <position position="36"/>
    </location>
    <ligand>
        <name>GDP</name>
        <dbReference type="ChEBI" id="CHEBI:58189"/>
    </ligand>
</feature>
<feature type="binding site" evidence="19 26 45 46 54 55 56">
    <location>
        <position position="36"/>
    </location>
    <ligand>
        <name>GTP</name>
        <dbReference type="ChEBI" id="CHEBI:37565"/>
    </ligand>
</feature>
<feature type="binding site" evidence="23 52 53">
    <location>
        <position position="42"/>
    </location>
    <ligand>
        <name>GDP</name>
        <dbReference type="ChEBI" id="CHEBI:58189"/>
    </ligand>
</feature>
<feature type="binding site" evidence="18 19 26 45 46 47 54 55 56">
    <location>
        <position position="42"/>
    </location>
    <ligand>
        <name>GTP</name>
        <dbReference type="ChEBI" id="CHEBI:37565"/>
    </ligand>
</feature>
<feature type="binding site" evidence="18 19 45 46 47">
    <location>
        <position position="65"/>
    </location>
    <ligand>
        <name>GTP</name>
        <dbReference type="ChEBI" id="CHEBI:37565"/>
    </ligand>
</feature>
<feature type="binding site" evidence="21 23 48 52">
    <location>
        <position position="127"/>
    </location>
    <ligand>
        <name>GDP</name>
        <dbReference type="ChEBI" id="CHEBI:58189"/>
    </ligand>
</feature>
<feature type="binding site" evidence="18 26 47 54 55 56">
    <location>
        <position position="127"/>
    </location>
    <ligand>
        <name>GTP</name>
        <dbReference type="ChEBI" id="CHEBI:37565"/>
    </ligand>
</feature>
<feature type="binding site" evidence="20 21 22 23 44 48 49 50 52 53">
    <location>
        <position position="130"/>
    </location>
    <ligand>
        <name>GDP</name>
        <dbReference type="ChEBI" id="CHEBI:58189"/>
    </ligand>
</feature>
<feature type="binding site" evidence="21 22 48 49">
    <location>
        <position position="148"/>
    </location>
    <ligand>
        <name>GDP</name>
        <dbReference type="ChEBI" id="CHEBI:58189"/>
    </ligand>
</feature>
<feature type="binding site" evidence="20 21 23 44 48 53">
    <location>
        <position position="164"/>
    </location>
    <ligand>
        <name>GDP</name>
        <dbReference type="ChEBI" id="CHEBI:58189"/>
    </ligand>
</feature>
<feature type="binding site" evidence="19 26 45 46 54 55 56">
    <location>
        <position position="164"/>
    </location>
    <ligand>
        <name>GTP</name>
        <dbReference type="ChEBI" id="CHEBI:37565"/>
    </ligand>
</feature>
<feature type="modified residue" description="Phosphoserine" evidence="58">
    <location>
        <position position="309"/>
    </location>
</feature>
<feature type="cross-link" description="Glycyl lysine isopeptide (Lys-Gly) (interchain with G-Cter in ubiquitin)" evidence="13">
    <location>
        <position position="142"/>
    </location>
</feature>
<feature type="cross-link" description="Glycyl lysine isopeptide (Lys-Gly) (interchain with G-Cter in ubiquitin)" evidence="13">
    <location>
        <position position="220"/>
    </location>
</feature>
<feature type="cross-link" description="Glycyl lysine isopeptide (Lys-Gly) (interchain with G-Cter in ubiquitin)" evidence="13">
    <location>
        <position position="230"/>
    </location>
</feature>
<feature type="cross-link" description="Glycyl lysine isopeptide (Lys-Gly) (interchain with G-Cter in ubiquitin)" evidence="13">
    <location>
        <position position="244"/>
    </location>
</feature>
<feature type="mutagenesis site" description="Reduced affinity for all nucleotides, but with preferential binding of GDP over GTP." evidence="9 21">
    <original>T</original>
    <variation>N</variation>
    <location>
        <position position="21"/>
    </location>
</feature>
<feature type="mutagenesis site" description="In RA3 mutant; abolished interaction with RPTOR without affecting GTP-binding; when associated with Y-35 and A-46." evidence="18">
    <original>A</original>
    <variation>F</variation>
    <location>
        <position position="29"/>
    </location>
</feature>
<feature type="mutagenesis site" description="In RA1 mutant; abolished interaction with RPTOR without affecting GTP-binding. Does not affect interaction with TFE3 and TFEB." evidence="18 25">
    <original>Y</original>
    <variation>A</variation>
    <location>
        <position position="31"/>
    </location>
</feature>
<feature type="mutagenesis site" description="In RA2 mutant; abolished interaction with RPTOR without affecting GTP-binding; when associated with A-46. Does not affect interaction with TFE3 and TFEB; when associated with A-46." evidence="18 25">
    <original>D</original>
    <variation>A</variation>
    <location>
        <position position="35"/>
    </location>
</feature>
<feature type="mutagenesis site" description="In RA3 mutant; abolished interaction with RPTOR without affecting GTP-binding; when associated with F-29 and A-46." evidence="18">
    <original>D</original>
    <variation>Y</variation>
    <location>
        <position position="35"/>
    </location>
</feature>
<feature type="mutagenesis site" description="In RA2 mutant; abolished interaction with RPTOR without affecting GTP-binding; when associated with A-35. In RA3 mutant; abolished interaction with RPTOR without affecting GTP-binding; when associated with F-29 and Y-35. Abolished interaction with RPTOR without affecting interaction with TFE3 and TFEB. Does not affect interaction with TFE3 and TFEB; when associated with A-35." evidence="18 25">
    <original>E</original>
    <variation>A</variation>
    <location>
        <position position="46"/>
    </location>
</feature>
<feature type="mutagenesis site" description="Maintains GTP-bound state, leading to activate mTORC1." evidence="19">
    <original>Q</original>
    <variation>L</variation>
    <location>
        <position position="66"/>
    </location>
</feature>
<feature type="mutagenesis site" description="Abolished interaction with TFE3 and TFEB without affecting interaction with RPTOR." evidence="25">
    <original>E</original>
    <variation>A</variation>
    <location>
        <position position="71"/>
    </location>
</feature>
<feature type="mutagenesis site" description="Abolished interaction with TFE3 and TFEB without affecting interaction with RPTOR." evidence="25">
    <original>E</original>
    <variation>A</variation>
    <location>
        <position position="100"/>
    </location>
</feature>
<feature type="mutagenesis site" description="Abolished interaction with TFE3 and TFEB without affecting interaction with RPTOR." evidence="25">
    <original>H</original>
    <variation>A</variation>
    <location>
        <position position="104"/>
    </location>
</feature>
<feature type="mutagenesis site" description="Abolished interaction with TFE3 and TFEB without affecting interaction with RPTOR." evidence="25">
    <original>Q</original>
    <variation>A</variation>
    <location>
        <position position="107"/>
    </location>
</feature>
<feature type="mutagenesis site" description="Abolished interaction with TFE3 and TFEB without affecting interaction with RPTOR." evidence="25">
    <original>E</original>
    <variation>A</variation>
    <location>
        <position position="111"/>
    </location>
</feature>
<feature type="mutagenesis site" description="Prevents RRAGA ubiquitination and alters interaction and regulation by GATOR1; when associated with R-220, R-230 and R-244." evidence="13">
    <original>K</original>
    <variation>R</variation>
    <location>
        <position position="142"/>
    </location>
</feature>
<feature type="mutagenesis site" description="Abolished interaction with TFE3 and TFEB without affecting interaction with RPTOR." evidence="25">
    <original>L</original>
    <variation>A</variation>
    <location>
        <position position="151"/>
    </location>
</feature>
<feature type="mutagenesis site" description="Abolished interaction with TFE3 and TFEB without affecting interaction with RPTOR." evidence="25">
    <original>R</original>
    <variation>A</variation>
    <location>
        <position position="153"/>
    </location>
</feature>
<feature type="mutagenesis site" description="Abolished interaction with TFE3 and TFEB without affecting interaction with RPTOR." evidence="25">
    <original>P</original>
    <variation>A</variation>
    <location>
        <position position="154"/>
    </location>
</feature>
<feature type="mutagenesis site" description="Prevents RRAGA ubiquitination and alters interaction and regulation by GATOR1; when associated with R-142, R-230 and R-244." evidence="13">
    <original>K</original>
    <variation>R</variation>
    <location>
        <position position="220"/>
    </location>
</feature>
<feature type="mutagenesis site" description="Prevents RRAGA ubiquitination and alters interaction and regulation by GATOR1; when associated with RR-142, R-220 and R-244." evidence="13">
    <original>K</original>
    <variation>R</variation>
    <location>
        <position position="230"/>
    </location>
</feature>
<feature type="mutagenesis site" description="Prevents RRAGA ubiquitination and alters interaction and regulation by GATOR1; when associated with RR-142, R-220 and R-230." evidence="13">
    <original>K</original>
    <variation>R</variation>
    <location>
        <position position="244"/>
    </location>
</feature>
<feature type="sequence conflict" description="In Ref. 2; AAB63255." evidence="33" ref="2">
    <original>E</original>
    <variation>G</variation>
    <location>
        <position position="229"/>
    </location>
</feature>
<feature type="sequence conflict" description="In Ref. 2; AAB63255." evidence="33" ref="2">
    <original>A</original>
    <variation>P</variation>
    <location>
        <position position="246"/>
    </location>
</feature>
<feature type="strand" evidence="60">
    <location>
        <begin position="6"/>
        <end position="13"/>
    </location>
</feature>
<feature type="strand" evidence="61">
    <location>
        <begin position="16"/>
        <end position="19"/>
    </location>
</feature>
<feature type="helix" evidence="60">
    <location>
        <begin position="20"/>
        <end position="28"/>
    </location>
</feature>
<feature type="helix" evidence="60">
    <location>
        <begin position="33"/>
        <end position="38"/>
    </location>
</feature>
<feature type="strand" evidence="60">
    <location>
        <begin position="44"/>
        <end position="53"/>
    </location>
</feature>
<feature type="strand" evidence="60">
    <location>
        <begin position="56"/>
        <end position="63"/>
    </location>
</feature>
<feature type="helix" evidence="60">
    <location>
        <begin position="67"/>
        <end position="73"/>
    </location>
</feature>
<feature type="turn" evidence="60">
    <location>
        <begin position="74"/>
        <end position="77"/>
    </location>
</feature>
<feature type="helix" evidence="60">
    <location>
        <begin position="78"/>
        <end position="82"/>
    </location>
</feature>
<feature type="strand" evidence="60">
    <location>
        <begin position="85"/>
        <end position="93"/>
    </location>
</feature>
<feature type="helix" evidence="60">
    <location>
        <begin position="99"/>
        <end position="116"/>
    </location>
</feature>
<feature type="strand" evidence="60">
    <location>
        <begin position="121"/>
        <end position="127"/>
    </location>
</feature>
<feature type="helix" evidence="60">
    <location>
        <begin position="129"/>
        <end position="131"/>
    </location>
</feature>
<feature type="helix" evidence="60">
    <location>
        <begin position="134"/>
        <end position="136"/>
    </location>
</feature>
<feature type="helix" evidence="60">
    <location>
        <begin position="137"/>
        <end position="151"/>
    </location>
</feature>
<feature type="turn" evidence="60">
    <location>
        <begin position="152"/>
        <end position="154"/>
    </location>
</feature>
<feature type="strand" evidence="60">
    <location>
        <begin position="158"/>
        <end position="161"/>
    </location>
</feature>
<feature type="strand" evidence="61">
    <location>
        <begin position="164"/>
        <end position="167"/>
    </location>
</feature>
<feature type="helix" evidence="60">
    <location>
        <begin position="168"/>
        <end position="178"/>
    </location>
</feature>
<feature type="strand" evidence="61">
    <location>
        <begin position="181"/>
        <end position="183"/>
    </location>
</feature>
<feature type="helix" evidence="59">
    <location>
        <begin position="188"/>
        <end position="198"/>
    </location>
</feature>
<feature type="strand" evidence="59">
    <location>
        <begin position="201"/>
        <end position="207"/>
    </location>
</feature>
<feature type="turn" evidence="59">
    <location>
        <begin position="208"/>
        <end position="210"/>
    </location>
</feature>
<feature type="strand" evidence="59">
    <location>
        <begin position="213"/>
        <end position="218"/>
    </location>
</feature>
<feature type="helix" evidence="59">
    <location>
        <begin position="227"/>
        <end position="243"/>
    </location>
</feature>
<feature type="turn" evidence="59">
    <location>
        <begin position="244"/>
        <end position="246"/>
    </location>
</feature>
<feature type="strand" evidence="59">
    <location>
        <begin position="249"/>
        <end position="256"/>
    </location>
</feature>
<feature type="strand" evidence="59">
    <location>
        <begin position="259"/>
        <end position="264"/>
    </location>
</feature>
<feature type="strand" evidence="59">
    <location>
        <begin position="267"/>
        <end position="277"/>
    </location>
</feature>
<feature type="strand" evidence="61">
    <location>
        <begin position="279"/>
        <end position="281"/>
    </location>
</feature>
<feature type="helix" evidence="59">
    <location>
        <begin position="283"/>
        <end position="304"/>
    </location>
</feature>
<proteinExistence type="evidence at protein level"/>
<keyword id="KW-0002">3D-structure</keyword>
<keyword id="KW-0053">Apoptosis</keyword>
<keyword id="KW-0963">Cytoplasm</keyword>
<keyword id="KW-0342">GTP-binding</keyword>
<keyword id="KW-0945">Host-virus interaction</keyword>
<keyword id="KW-0378">Hydrolase</keyword>
<keyword id="KW-1017">Isopeptide bond</keyword>
<keyword id="KW-0458">Lysosome</keyword>
<keyword id="KW-0472">Membrane</keyword>
<keyword id="KW-0547">Nucleotide-binding</keyword>
<keyword id="KW-0539">Nucleus</keyword>
<keyword id="KW-0597">Phosphoprotein</keyword>
<keyword id="KW-1267">Proteomics identification</keyword>
<keyword id="KW-1185">Reference proteome</keyword>
<keyword id="KW-0832">Ubl conjugation</keyword>
<reference evidence="39" key="1">
    <citation type="journal article" date="1995" name="J. Biol. Chem.">
        <title>Cloning of a novel family of mammalian GTP-binding proteins (RagA, RagBs, RagBl) with remote similarity to the Ras-related GTPases.</title>
        <authorList>
            <person name="Schuermann A."/>
            <person name="Brauers A."/>
            <person name="Massmann S."/>
            <person name="Becker W."/>
            <person name="Joost H.-G."/>
        </authorList>
    </citation>
    <scope>NUCLEOTIDE SEQUENCE [MRNA]</scope>
    <source>
        <tissue evidence="39">Fetal brain</tissue>
    </source>
</reference>
<reference evidence="33 35" key="2">
    <citation type="journal article" date="1997" name="J. Virol.">
        <title>Interaction of an adenovirus 14.7-kilodalton protein inhibitor of tumor necrosis factor alpha cytolysis with a new member of the GTPase superfamily of signal transducers.</title>
        <authorList>
            <person name="Li Y."/>
            <person name="Kang J."/>
            <person name="Horwitz M.S."/>
        </authorList>
    </citation>
    <scope>NUCLEOTIDE SEQUENCE [MRNA]</scope>
    <scope>FUNCTION</scope>
    <scope>INTERACTION WITH ADENOVIRUS E3 14.7 KDA PROTEIN (MICROBIAL INFECTION)</scope>
    <scope>SUBCELLULAR LOCATION</scope>
    <scope>TISSUE SPECIFICITY</scope>
</reference>
<reference evidence="33" key="3">
    <citation type="journal article" date="1998" name="J. Cell Sci.">
        <title>RagA is a functional homologue of S. cerevisiae Gtr1p involved in the Ran/Gsp1-GTPase pathway.</title>
        <authorList>
            <person name="Hirose E."/>
            <person name="Nakashima N."/>
            <person name="Sekiguchi T."/>
            <person name="Nishimoto T."/>
        </authorList>
    </citation>
    <scope>NUCLEOTIDE SEQUENCE [MRNA]</scope>
    <scope>FUNCTION</scope>
    <scope>SUBCELLULAR LOCATION</scope>
</reference>
<reference key="4">
    <citation type="journal article" date="2004" name="Nat. Genet.">
        <title>Complete sequencing and characterization of 21,243 full-length human cDNAs.</title>
        <authorList>
            <person name="Ota T."/>
            <person name="Suzuki Y."/>
            <person name="Nishikawa T."/>
            <person name="Otsuki T."/>
            <person name="Sugiyama T."/>
            <person name="Irie R."/>
            <person name="Wakamatsu A."/>
            <person name="Hayashi K."/>
            <person name="Sato H."/>
            <person name="Nagai K."/>
            <person name="Kimura K."/>
            <person name="Makita H."/>
            <person name="Sekine M."/>
            <person name="Obayashi M."/>
            <person name="Nishi T."/>
            <person name="Shibahara T."/>
            <person name="Tanaka T."/>
            <person name="Ishii S."/>
            <person name="Yamamoto J."/>
            <person name="Saito K."/>
            <person name="Kawai Y."/>
            <person name="Isono Y."/>
            <person name="Nakamura Y."/>
            <person name="Nagahari K."/>
            <person name="Murakami K."/>
            <person name="Yasuda T."/>
            <person name="Iwayanagi T."/>
            <person name="Wagatsuma M."/>
            <person name="Shiratori A."/>
            <person name="Sudo H."/>
            <person name="Hosoiri T."/>
            <person name="Kaku Y."/>
            <person name="Kodaira H."/>
            <person name="Kondo H."/>
            <person name="Sugawara M."/>
            <person name="Takahashi M."/>
            <person name="Kanda K."/>
            <person name="Yokoi T."/>
            <person name="Furuya T."/>
            <person name="Kikkawa E."/>
            <person name="Omura Y."/>
            <person name="Abe K."/>
            <person name="Kamihara K."/>
            <person name="Katsuta N."/>
            <person name="Sato K."/>
            <person name="Tanikawa M."/>
            <person name="Yamazaki M."/>
            <person name="Ninomiya K."/>
            <person name="Ishibashi T."/>
            <person name="Yamashita H."/>
            <person name="Murakawa K."/>
            <person name="Fujimori K."/>
            <person name="Tanai H."/>
            <person name="Kimata M."/>
            <person name="Watanabe M."/>
            <person name="Hiraoka S."/>
            <person name="Chiba Y."/>
            <person name="Ishida S."/>
            <person name="Ono Y."/>
            <person name="Takiguchi S."/>
            <person name="Watanabe S."/>
            <person name="Yosida M."/>
            <person name="Hotuta T."/>
            <person name="Kusano J."/>
            <person name="Kanehori K."/>
            <person name="Takahashi-Fujii A."/>
            <person name="Hara H."/>
            <person name="Tanase T.-O."/>
            <person name="Nomura Y."/>
            <person name="Togiya S."/>
            <person name="Komai F."/>
            <person name="Hara R."/>
            <person name="Takeuchi K."/>
            <person name="Arita M."/>
            <person name="Imose N."/>
            <person name="Musashino K."/>
            <person name="Yuuki H."/>
            <person name="Oshima A."/>
            <person name="Sasaki N."/>
            <person name="Aotsuka S."/>
            <person name="Yoshikawa Y."/>
            <person name="Matsunawa H."/>
            <person name="Ichihara T."/>
            <person name="Shiohata N."/>
            <person name="Sano S."/>
            <person name="Moriya S."/>
            <person name="Momiyama H."/>
            <person name="Satoh N."/>
            <person name="Takami S."/>
            <person name="Terashima Y."/>
            <person name="Suzuki O."/>
            <person name="Nakagawa S."/>
            <person name="Senoh A."/>
            <person name="Mizoguchi H."/>
            <person name="Goto Y."/>
            <person name="Shimizu F."/>
            <person name="Wakebe H."/>
            <person name="Hishigaki H."/>
            <person name="Watanabe T."/>
            <person name="Sugiyama A."/>
            <person name="Takemoto M."/>
            <person name="Kawakami B."/>
            <person name="Yamazaki M."/>
            <person name="Watanabe K."/>
            <person name="Kumagai A."/>
            <person name="Itakura S."/>
            <person name="Fukuzumi Y."/>
            <person name="Fujimori Y."/>
            <person name="Komiyama M."/>
            <person name="Tashiro H."/>
            <person name="Tanigami A."/>
            <person name="Fujiwara T."/>
            <person name="Ono T."/>
            <person name="Yamada K."/>
            <person name="Fujii Y."/>
            <person name="Ozaki K."/>
            <person name="Hirao M."/>
            <person name="Ohmori Y."/>
            <person name="Kawabata A."/>
            <person name="Hikiji T."/>
            <person name="Kobatake N."/>
            <person name="Inagaki H."/>
            <person name="Ikema Y."/>
            <person name="Okamoto S."/>
            <person name="Okitani R."/>
            <person name="Kawakami T."/>
            <person name="Noguchi S."/>
            <person name="Itoh T."/>
            <person name="Shigeta K."/>
            <person name="Senba T."/>
            <person name="Matsumura K."/>
            <person name="Nakajima Y."/>
            <person name="Mizuno T."/>
            <person name="Morinaga M."/>
            <person name="Sasaki M."/>
            <person name="Togashi T."/>
            <person name="Oyama M."/>
            <person name="Hata H."/>
            <person name="Watanabe M."/>
            <person name="Komatsu T."/>
            <person name="Mizushima-Sugano J."/>
            <person name="Satoh T."/>
            <person name="Shirai Y."/>
            <person name="Takahashi Y."/>
            <person name="Nakagawa K."/>
            <person name="Okumura K."/>
            <person name="Nagase T."/>
            <person name="Nomura N."/>
            <person name="Kikuchi H."/>
            <person name="Masuho Y."/>
            <person name="Yamashita R."/>
            <person name="Nakai K."/>
            <person name="Yada T."/>
            <person name="Nakamura Y."/>
            <person name="Ohara O."/>
            <person name="Isogai T."/>
            <person name="Sugano S."/>
        </authorList>
    </citation>
    <scope>NUCLEOTIDE SEQUENCE [LARGE SCALE MRNA]</scope>
    <source>
        <tissue>Brain cortex</tissue>
    </source>
</reference>
<reference evidence="38" key="5">
    <citation type="journal article" date="2004" name="Nature">
        <title>DNA sequence and analysis of human chromosome 9.</title>
        <authorList>
            <person name="Humphray S.J."/>
            <person name="Oliver K."/>
            <person name="Hunt A.R."/>
            <person name="Plumb R.W."/>
            <person name="Loveland J.E."/>
            <person name="Howe K.L."/>
            <person name="Andrews T.D."/>
            <person name="Searle S."/>
            <person name="Hunt S.E."/>
            <person name="Scott C.E."/>
            <person name="Jones M.C."/>
            <person name="Ainscough R."/>
            <person name="Almeida J.P."/>
            <person name="Ambrose K.D."/>
            <person name="Ashwell R.I.S."/>
            <person name="Babbage A.K."/>
            <person name="Babbage S."/>
            <person name="Bagguley C.L."/>
            <person name="Bailey J."/>
            <person name="Banerjee R."/>
            <person name="Barker D.J."/>
            <person name="Barlow K.F."/>
            <person name="Bates K."/>
            <person name="Beasley H."/>
            <person name="Beasley O."/>
            <person name="Bird C.P."/>
            <person name="Bray-Allen S."/>
            <person name="Brown A.J."/>
            <person name="Brown J.Y."/>
            <person name="Burford D."/>
            <person name="Burrill W."/>
            <person name="Burton J."/>
            <person name="Carder C."/>
            <person name="Carter N.P."/>
            <person name="Chapman J.C."/>
            <person name="Chen Y."/>
            <person name="Clarke G."/>
            <person name="Clark S.Y."/>
            <person name="Clee C.M."/>
            <person name="Clegg S."/>
            <person name="Collier R.E."/>
            <person name="Corby N."/>
            <person name="Crosier M."/>
            <person name="Cummings A.T."/>
            <person name="Davies J."/>
            <person name="Dhami P."/>
            <person name="Dunn M."/>
            <person name="Dutta I."/>
            <person name="Dyer L.W."/>
            <person name="Earthrowl M.E."/>
            <person name="Faulkner L."/>
            <person name="Fleming C.J."/>
            <person name="Frankish A."/>
            <person name="Frankland J.A."/>
            <person name="French L."/>
            <person name="Fricker D.G."/>
            <person name="Garner P."/>
            <person name="Garnett J."/>
            <person name="Ghori J."/>
            <person name="Gilbert J.G.R."/>
            <person name="Glison C."/>
            <person name="Grafham D.V."/>
            <person name="Gribble S."/>
            <person name="Griffiths C."/>
            <person name="Griffiths-Jones S."/>
            <person name="Grocock R."/>
            <person name="Guy J."/>
            <person name="Hall R.E."/>
            <person name="Hammond S."/>
            <person name="Harley J.L."/>
            <person name="Harrison E.S.I."/>
            <person name="Hart E.A."/>
            <person name="Heath P.D."/>
            <person name="Henderson C.D."/>
            <person name="Hopkins B.L."/>
            <person name="Howard P.J."/>
            <person name="Howden P.J."/>
            <person name="Huckle E."/>
            <person name="Johnson C."/>
            <person name="Johnson D."/>
            <person name="Joy A.A."/>
            <person name="Kay M."/>
            <person name="Keenan S."/>
            <person name="Kershaw J.K."/>
            <person name="Kimberley A.M."/>
            <person name="King A."/>
            <person name="Knights A."/>
            <person name="Laird G.K."/>
            <person name="Langford C."/>
            <person name="Lawlor S."/>
            <person name="Leongamornlert D.A."/>
            <person name="Leversha M."/>
            <person name="Lloyd C."/>
            <person name="Lloyd D.M."/>
            <person name="Lovell J."/>
            <person name="Martin S."/>
            <person name="Mashreghi-Mohammadi M."/>
            <person name="Matthews L."/>
            <person name="McLaren S."/>
            <person name="McLay K.E."/>
            <person name="McMurray A."/>
            <person name="Milne S."/>
            <person name="Nickerson T."/>
            <person name="Nisbett J."/>
            <person name="Nordsiek G."/>
            <person name="Pearce A.V."/>
            <person name="Peck A.I."/>
            <person name="Porter K.M."/>
            <person name="Pandian R."/>
            <person name="Pelan S."/>
            <person name="Phillimore B."/>
            <person name="Povey S."/>
            <person name="Ramsey Y."/>
            <person name="Rand V."/>
            <person name="Scharfe M."/>
            <person name="Sehra H.K."/>
            <person name="Shownkeen R."/>
            <person name="Sims S.K."/>
            <person name="Skuce C.D."/>
            <person name="Smith M."/>
            <person name="Steward C.A."/>
            <person name="Swarbreck D."/>
            <person name="Sycamore N."/>
            <person name="Tester J."/>
            <person name="Thorpe A."/>
            <person name="Tracey A."/>
            <person name="Tromans A."/>
            <person name="Thomas D.W."/>
            <person name="Wall M."/>
            <person name="Wallis J.M."/>
            <person name="West A.P."/>
            <person name="Whitehead S.L."/>
            <person name="Willey D.L."/>
            <person name="Williams S.A."/>
            <person name="Wilming L."/>
            <person name="Wray P.W."/>
            <person name="Young L."/>
            <person name="Ashurst J.L."/>
            <person name="Coulson A."/>
            <person name="Blocker H."/>
            <person name="Durbin R.M."/>
            <person name="Sulston J.E."/>
            <person name="Hubbard T."/>
            <person name="Jackson M.J."/>
            <person name="Bentley D.R."/>
            <person name="Beck S."/>
            <person name="Rogers J."/>
            <person name="Dunham I."/>
        </authorList>
    </citation>
    <scope>NUCLEOTIDE SEQUENCE [LARGE SCALE GENOMIC DNA]</scope>
</reference>
<reference key="6">
    <citation type="submission" date="2005-09" db="EMBL/GenBank/DDBJ databases">
        <authorList>
            <person name="Mural R.J."/>
            <person name="Istrail S."/>
            <person name="Sutton G.G."/>
            <person name="Florea L."/>
            <person name="Halpern A.L."/>
            <person name="Mobarry C.M."/>
            <person name="Lippert R."/>
            <person name="Walenz B."/>
            <person name="Shatkay H."/>
            <person name="Dew I."/>
            <person name="Miller J.R."/>
            <person name="Flanigan M.J."/>
            <person name="Edwards N.J."/>
            <person name="Bolanos R."/>
            <person name="Fasulo D."/>
            <person name="Halldorsson B.V."/>
            <person name="Hannenhalli S."/>
            <person name="Turner R."/>
            <person name="Yooseph S."/>
            <person name="Lu F."/>
            <person name="Nusskern D.R."/>
            <person name="Shue B.C."/>
            <person name="Zheng X.H."/>
            <person name="Zhong F."/>
            <person name="Delcher A.L."/>
            <person name="Huson D.H."/>
            <person name="Kravitz S.A."/>
            <person name="Mouchard L."/>
            <person name="Reinert K."/>
            <person name="Remington K.A."/>
            <person name="Clark A.G."/>
            <person name="Waterman M.S."/>
            <person name="Eichler E.E."/>
            <person name="Adams M.D."/>
            <person name="Hunkapiller M.W."/>
            <person name="Myers E.W."/>
            <person name="Venter J.C."/>
        </authorList>
    </citation>
    <scope>NUCLEOTIDE SEQUENCE [LARGE SCALE GENOMIC DNA]</scope>
</reference>
<reference evidence="36" key="7">
    <citation type="journal article" date="2004" name="Genome Res.">
        <title>The status, quality, and expansion of the NIH full-length cDNA project: the Mammalian Gene Collection (MGC).</title>
        <authorList>
            <consortium name="The MGC Project Team"/>
        </authorList>
    </citation>
    <scope>NUCLEOTIDE SEQUENCE [LARGE SCALE MRNA]</scope>
    <source>
        <tissue evidence="37">Brain</tissue>
        <tissue evidence="36">Ovary</tissue>
    </source>
</reference>
<reference evidence="33" key="8">
    <citation type="journal article" date="2001" name="J. Biol. Chem.">
        <title>Novel G proteins, Rag C and Rag D, interact with GTP-binding proteins, Rag A and Rag B.</title>
        <authorList>
            <person name="Sekiguchi T."/>
            <person name="Hirose E."/>
            <person name="Nakashima N."/>
            <person name="Ii M."/>
            <person name="Nishimoto T."/>
        </authorList>
    </citation>
    <scope>INTERACTION WITH RRAGC AND RRAGD</scope>
</reference>
<reference evidence="33" key="9">
    <citation type="journal article" date="2004" name="J. Biol. Chem.">
        <title>A novel human nucleolar protein, Nop132, binds to the G proteins, RRAG A/C/D.</title>
        <authorList>
            <person name="Sekiguchi T."/>
            <person name="Todaka Y."/>
            <person name="Wang Y."/>
            <person name="Hirose E."/>
            <person name="Nakashima N."/>
            <person name="Nishimoto T."/>
        </authorList>
    </citation>
    <scope>INTERACTION WITH NOL8</scope>
    <scope>SUBUNIT</scope>
    <scope>GTP-BINDING</scope>
</reference>
<reference key="10">
    <citation type="journal article" date="2008" name="Science">
        <title>The Rag GTPases bind raptor and mediate amino acid signaling to mTORC1.</title>
        <authorList>
            <person name="Sancak Y."/>
            <person name="Peterson T.R."/>
            <person name="Shaul Y.D."/>
            <person name="Lindquist R.A."/>
            <person name="Thoreen C.C."/>
            <person name="Bar-Peled L."/>
            <person name="Sabatini D.M."/>
        </authorList>
    </citation>
    <scope>INTERACTION WITH RPTOR</scope>
</reference>
<reference key="11">
    <citation type="journal article" date="2010" name="Cell">
        <title>Ragulator-Rag complex targets mTORC1 to the lysosomal surface and is necessary for its activation by amino acids.</title>
        <authorList>
            <person name="Sancak Y."/>
            <person name="Bar-Peled L."/>
            <person name="Zoncu R."/>
            <person name="Markhard A.L."/>
            <person name="Nada S."/>
            <person name="Sabatini D.M."/>
        </authorList>
    </citation>
    <scope>FUNCTION</scope>
    <scope>SUBCELLULAR LOCATION</scope>
    <scope>INTERACTION WITH RRAGC</scope>
</reference>
<reference key="12">
    <citation type="journal article" date="2012" name="Cell">
        <title>Ragulator is a GEF for the Rag GTPases that signal amino acid levels to mTORC1.</title>
        <authorList>
            <person name="Bar-Peled L."/>
            <person name="Schweitzer L.D."/>
            <person name="Zoncu R."/>
            <person name="Sabatini D.M."/>
        </authorList>
    </citation>
    <scope>ACTIVITY REGULATION</scope>
</reference>
<reference key="13">
    <citation type="journal article" date="2012" name="Mol. Cell">
        <title>SH3BP4 is a negative regulator of amino acid-Rag GTPase-mTORC1 signaling.</title>
        <authorList>
            <person name="Kim Y.M."/>
            <person name="Stone M."/>
            <person name="Hwang T.H."/>
            <person name="Kim Y.G."/>
            <person name="Dunlevy J.R."/>
            <person name="Griffin T.J."/>
            <person name="Kim D.H."/>
        </authorList>
    </citation>
    <scope>INTERACTION WITH SH3BP4</scope>
</reference>
<reference key="14">
    <citation type="journal article" date="2013" name="J. Proteome Res.">
        <title>Toward a comprehensive characterization of a human cancer cell phosphoproteome.</title>
        <authorList>
            <person name="Zhou H."/>
            <person name="Di Palma S."/>
            <person name="Preisinger C."/>
            <person name="Peng M."/>
            <person name="Polat A.N."/>
            <person name="Heck A.J."/>
            <person name="Mohammed S."/>
        </authorList>
    </citation>
    <scope>PHOSPHORYLATION [LARGE SCALE ANALYSIS] AT SER-309</scope>
    <scope>IDENTIFICATION BY MASS SPECTROMETRY [LARGE SCALE ANALYSIS]</scope>
    <source>
        <tissue>Erythroleukemia</tissue>
    </source>
</reference>
<reference key="15">
    <citation type="journal article" date="2013" name="Mol. Cell">
        <title>The folliculin tumor suppressor is a GAP for the RagC/D GTPases that signal amino acid levels to mTORC1.</title>
        <authorList>
            <person name="Tsun Z.Y."/>
            <person name="Bar-Peled L."/>
            <person name="Chantranupong L."/>
            <person name="Zoncu R."/>
            <person name="Wang T."/>
            <person name="Kim C."/>
            <person name="Spooner E."/>
            <person name="Sabatini D.M."/>
        </authorList>
    </citation>
    <scope>FUNCTION</scope>
    <scope>CATALYTIC ACTIVITY</scope>
    <scope>MUTAGENESIS OF THR-21</scope>
</reference>
<reference key="16">
    <citation type="journal article" date="2013" name="Science">
        <title>A Tumor suppressor complex with GAP activity for the Rag GTPases that signal amino acid sufficiency to mTORC1.</title>
        <authorList>
            <person name="Bar-Peled L."/>
            <person name="Chantranupong L."/>
            <person name="Cherniack A.D."/>
            <person name="Chen W.W."/>
            <person name="Ottina K.A."/>
            <person name="Grabiner B.C."/>
            <person name="Spear E.D."/>
            <person name="Carter S.L."/>
            <person name="Meyerson M."/>
            <person name="Sabatini D.M."/>
        </authorList>
    </citation>
    <scope>CATALYTIC ACTIVITY</scope>
    <scope>ACTIVITY REGULATION</scope>
    <scope>INTERACTION WITH THE GATOR1 COMPLEX</scope>
</reference>
<reference key="17">
    <citation type="journal article" date="2014" name="Cell">
        <title>Sestrins function as guanine nucleotide dissociation inhibitors for Rag GTPases to control mTORC1 signaling.</title>
        <authorList>
            <person name="Peng M."/>
            <person name="Yin N."/>
            <person name="Li M.O."/>
        </authorList>
    </citation>
    <scope>INTERACTION WITH SESN1; SESN2 AND SESN3</scope>
</reference>
<reference key="18">
    <citation type="journal article" date="2015" name="Nature">
        <title>SLC38A9 is a component of the lysosomal amino acid sensing machinery that controls mTORC1.</title>
        <authorList>
            <person name="Rebsamen M."/>
            <person name="Pochini L."/>
            <person name="Stasyk T."/>
            <person name="de Araujo M.E."/>
            <person name="Galluccio M."/>
            <person name="Kandasamy R.K."/>
            <person name="Snijder B."/>
            <person name="Fauster A."/>
            <person name="Rudashevskaya E.L."/>
            <person name="Bruckner M."/>
            <person name="Scorzoni S."/>
            <person name="Filipek P.A."/>
            <person name="Huber K.V."/>
            <person name="Bigenzahn J.W."/>
            <person name="Heinz L.X."/>
            <person name="Kraft C."/>
            <person name="Bennett K.L."/>
            <person name="Indiveri C."/>
            <person name="Huber L.A."/>
            <person name="Superti-Furga G."/>
        </authorList>
    </citation>
    <scope>INTERACTION WITH SLC38A9</scope>
</reference>
<reference key="19">
    <citation type="journal article" date="2015" name="Science">
        <title>Metabolism. Lysosomal amino acid transporter SLC38A9 signals arginine sufficiency to mTORC1.</title>
        <authorList>
            <person name="Wang S."/>
            <person name="Tsun Z.Y."/>
            <person name="Wolfson R.L."/>
            <person name="Shen K."/>
            <person name="Wyant G.A."/>
            <person name="Plovanich M.E."/>
            <person name="Yuan E.D."/>
            <person name="Jones T.D."/>
            <person name="Chantranupong L."/>
            <person name="Comb W."/>
            <person name="Wang T."/>
            <person name="Bar-Peled L."/>
            <person name="Zoncu R."/>
            <person name="Straub C."/>
            <person name="Kim C."/>
            <person name="Park J."/>
            <person name="Sabatini B.L."/>
            <person name="Sabatini D.M."/>
        </authorList>
    </citation>
    <scope>INTERACTION WITH SLC38A9</scope>
</reference>
<reference key="20">
    <citation type="journal article" date="2015" name="Mol. Cell">
        <title>The ubiquitination of RagA GTPase by RNF152 negatively regulates mTORC1 activation.</title>
        <authorList>
            <person name="Deng L."/>
            <person name="Jiang C."/>
            <person name="Chen L."/>
            <person name="Jin J."/>
            <person name="Wei J."/>
            <person name="Zhao L."/>
            <person name="Chen M."/>
            <person name="Pan W."/>
            <person name="Xu Y."/>
            <person name="Chu H."/>
            <person name="Wang X."/>
            <person name="Ge X."/>
            <person name="Li D."/>
            <person name="Liao L."/>
            <person name="Liu M."/>
            <person name="Li L."/>
            <person name="Wang P."/>
        </authorList>
    </citation>
    <scope>FUNCTION</scope>
    <scope>ACTIVITY REGULATION</scope>
    <scope>UBIQUITINATION AT LYS-142; LYS-220; LYS-230 AND LYS-244 BY RNF152</scope>
    <scope>INTERACTION WITH RNF152; TSC2 AND THE GATOR1 COMPLEX</scope>
    <scope>MUTAGENESIS OF LYS-142; LYS-220; LYS-230 AND LYS-244</scope>
</reference>
<reference key="21">
    <citation type="journal article" date="2019" name="Nat. Cell Biol.">
        <title>The lysosomal GPCR-like protein GPR137B regulates Rag and mTORC1 localization and activity.</title>
        <authorList>
            <person name="Gan L."/>
            <person name="Seki A."/>
            <person name="Shen K."/>
            <person name="Iyer H."/>
            <person name="Han K."/>
            <person name="Hayer A."/>
            <person name="Wollman R."/>
            <person name="Ge X."/>
            <person name="Lin J.R."/>
            <person name="Dey G."/>
            <person name="Talbot W.S."/>
            <person name="Meyer T."/>
        </authorList>
    </citation>
    <scope>INTERACTION WITH GPR137B</scope>
    <scope>SUBCELLULAR LOCATION</scope>
</reference>
<reference key="22">
    <citation type="journal article" date="2023" name="Mol. Cell">
        <title>A central role for regulated protein stability in the control of TFE3 and MITF by nutrients.</title>
        <authorList>
            <person name="Nardone C."/>
            <person name="Palanski B.A."/>
            <person name="Scott D.C."/>
            <person name="Timms R.T."/>
            <person name="Barber K.W."/>
            <person name="Gu X."/>
            <person name="Mao A."/>
            <person name="Leng Y."/>
            <person name="Watson E.V."/>
            <person name="Schulman B.A."/>
            <person name="Cole P.A."/>
            <person name="Elledge S.J."/>
        </authorList>
    </citation>
    <scope>INTERACTION WITH TFE3 AND MITF</scope>
    <scope>MUTAGENESIS OF TYR-31; ASP-35; GLU-46; GLU-71; GLU-100; HIS-104; GLN-107; GLU-111; LEU-151; ARG-153 AND PRO-154</scope>
</reference>
<reference key="23">
    <citation type="journal article" date="2023" name="Mol. Cell">
        <title>MORG1 limits mTORC1 signaling by inhibiting Rag GTPases.</title>
        <authorList>
            <person name="Abudu Y.P."/>
            <person name="Kournoutis A."/>
            <person name="Brenne H.B."/>
            <person name="Lamark T."/>
            <person name="Johansen T."/>
        </authorList>
    </citation>
    <scope>FUNCTION</scope>
    <scope>INTERACTION WITH WDR83</scope>
</reference>
<reference evidence="43" key="24">
    <citation type="journal article" date="2017" name="Science">
        <title>Crystal structure of the human lysosomal mTORC1 scaffold complex and its impact on signaling.</title>
        <authorList>
            <person name="de Araujo M.E.G."/>
            <person name="Naschberger A."/>
            <person name="Fuernrohr B.G."/>
            <person name="Stasyk T."/>
            <person name="Dunzendorfer-Matt T."/>
            <person name="Lechner S."/>
            <person name="Welti S."/>
            <person name="Kremser L."/>
            <person name="Shivalingaiah G."/>
            <person name="Offterdinger M."/>
            <person name="Lindner H.H."/>
            <person name="Huber L.A."/>
            <person name="Scheffzek K."/>
        </authorList>
    </citation>
    <scope>X-RAY CRYSTALLOGRAPHY (2.90 ANGSTROMS) OF 183-313 IN COMPLEX WITH RRAGC; LAMTOR1; LAMTOR2; LAMTOR3; LAMTOR4 AND LAMTOR5</scope>
    <scope>SUBCELLULAR LOCATION</scope>
</reference>
<reference evidence="41" key="25">
    <citation type="journal article" date="2017" name="Nat. Commun.">
        <title>Structural basis for the assembly of the Ragulator-Rag GTPase complex.</title>
        <authorList>
            <person name="Yonehara R."/>
            <person name="Nada S."/>
            <person name="Nakai T."/>
            <person name="Nakai M."/>
            <person name="Kitamura A."/>
            <person name="Ogawa A."/>
            <person name="Nakatsumi H."/>
            <person name="Nakayama K.I."/>
            <person name="Li S."/>
            <person name="Standley D.M."/>
            <person name="Yamashita E."/>
            <person name="Nakagawa A."/>
            <person name="Okada M."/>
        </authorList>
    </citation>
    <scope>X-RAY CRYSTALLOGRAPHY (2.02 ANGSTROMS) OF 238-375 IN COMPLEX WITH RRAGC; LAMTOR1; LAMTOR2; LAMTOR3; LAMTOR4 AND LAMTOR5</scope>
    <scope>SUBCELLULAR LOCATION</scope>
</reference>
<reference evidence="42" key="26">
    <citation type="journal article" date="2018" name="Nature">
        <title>Architecture of the human GATOR1 and GATOR1-Rag GTPases complexes.</title>
        <authorList>
            <person name="Shen K."/>
            <person name="Huang R.K."/>
            <person name="Brignole E.J."/>
            <person name="Condon K.J."/>
            <person name="Valenstein M.L."/>
            <person name="Chantranupong L."/>
            <person name="Bomaliyamu A."/>
            <person name="Choe A."/>
            <person name="Hong C."/>
            <person name="Yu Z."/>
            <person name="Sabatini D.M."/>
        </authorList>
    </citation>
    <scope>STRUCTURE BY ELECTRON MICROSCOPY (4.00 ANGSTROMS) IN COMPLEX WITH RRAGC; DEPDC5; NPRL2 AND NPRL3</scope>
    <scope>ACTIVITY REGULATION</scope>
</reference>
<reference evidence="48" key="27">
    <citation type="journal article" date="2019" name="Cell">
        <title>Cryo-EM structure of the human FLCN-FNIP2-Rag-Ragulator complex.</title>
        <authorList>
            <person name="Shen K."/>
            <person name="Rogala K.B."/>
            <person name="Chou H.T."/>
            <person name="Huang R.K."/>
            <person name="Yu Z."/>
            <person name="Sabatini D.M."/>
        </authorList>
    </citation>
    <scope>STRUCTURE BY ELECTRON MICROSCOPY (3.31 ANGSTROMS) IN COMPLEX WITH GDP; FLCN; FNIP2; RRAGC; LAMTOR1; LAMTOR2; LAMTOR3; LAMTOR4 AND LAMTOR5</scope>
    <scope>IDENTIFICATION IN THE LFC COMPLEX</scope>
    <scope>MUTAGENESIS OF THR-21</scope>
</reference>
<reference evidence="45 46" key="28">
    <citation type="journal article" date="2019" name="Science">
        <title>Architecture of human Rag GTPase heterodimers and their complex with mTORC1.</title>
        <authorList>
            <person name="Anandapadamanaban M."/>
            <person name="Masson G.R."/>
            <person name="Perisic O."/>
            <person name="Berndt A."/>
            <person name="Kaufman J."/>
            <person name="Johnson C.M."/>
            <person name="Santhanam B."/>
            <person name="Rogala K.B."/>
            <person name="Sabatini D.M."/>
            <person name="Williams R.L."/>
        </authorList>
    </citation>
    <scope>STRUCTURE BY ELECTRON MICROSCOPY (5.50 ANGSTROMS) IN COMPLEX WITH GTP; RRAGC; RPTOR; MLST8; MTOR AND AKT1S1</scope>
    <scope>FUNCTION</scope>
    <scope>MUTAGENESIS OF GLN-66</scope>
</reference>
<reference evidence="47" key="29">
    <citation type="journal article" date="2019" name="Science">
        <title>Structural basis for the docking of mTORC1 on the lysosomal surface.</title>
        <authorList>
            <person name="Rogala K.B."/>
            <person name="Gu X."/>
            <person name="Kedir J.F."/>
            <person name="Abu-Remaileh M."/>
            <person name="Bianchi L.F."/>
            <person name="Bottino A.M.S."/>
            <person name="Dueholm R."/>
            <person name="Niehaus A."/>
            <person name="Overwijn D."/>
            <person name="Fils A.P."/>
            <person name="Zhou S.X."/>
            <person name="Leary D."/>
            <person name="Laqtom N.N."/>
            <person name="Brignole E.J."/>
            <person name="Sabatini D.M."/>
        </authorList>
    </citation>
    <scope>STRUCTURE BY ELECTRON MICROSCOPY (3.18 ANGSTROMS) IN COMPLEX WITH GTP; RRAGC; RPTOR; LAMTOR1; LAMTOR2; LAMTOR3; LAMTOR4 AND LAMTOR5</scope>
    <scope>FUNCTION</scope>
    <scope>MUTAGENESIS OF ALA-29; TYR-31; ASP-35 AND GLU-46</scope>
</reference>
<reference evidence="44" key="30">
    <citation type="journal article" date="2019" name="Science">
        <title>Structural mechanism of a Rag GTPase activation checkpoint by the lysosomal folliculin complex.</title>
        <authorList>
            <person name="Lawrence R.E."/>
            <person name="Fromm S.A."/>
            <person name="Fu Y."/>
            <person name="Yokom A.L."/>
            <person name="Kim D.J."/>
            <person name="Thelen A.M."/>
            <person name="Young L.N."/>
            <person name="Lim C.Y."/>
            <person name="Samelson A.J."/>
            <person name="Hurley J.H."/>
            <person name="Zoncu R."/>
        </authorList>
    </citation>
    <scope>STRUCTURE BY ELECTRON MICROSCOPY (3.60 ANGSTROMS) IN COMPLEX WITH GDP; FLCN; FNIP2; RRAGC; LAMTOR1; LAMTOR2; LAMTOR3; LAMTOR4 AND LAMTOR5</scope>
    <scope>IDENTIFICATION IN THE LFC COMPLEX</scope>
</reference>
<reference evidence="49 50" key="31">
    <citation type="journal article" date="2020" name="Nat. Struct. Mol. Biol.">
        <title>Structural mechanism for amino acid-dependent Rag GTPase nucleotide state switching by SLC38A9.</title>
        <authorList>
            <person name="Fromm S.A."/>
            <person name="Lawrence R.E."/>
            <person name="Hurley J.H."/>
        </authorList>
    </citation>
    <scope>STRUCTURE BY ELECTRON MICROSCOPY (3.20 ANGSTROMS) IN COMPLEX WITH GDP; THE RAGULATOR COMPLEX; SLC38A9 AND RRAGC</scope>
    <scope>FUNCTION</scope>
    <scope>CATALYTIC ACTIVITY</scope>
    <scope>SUBUNIT</scope>
</reference>
<reference evidence="51 52 53" key="32">
    <citation type="journal article" date="2022" name="Mol. Cell">
        <title>Cryo-EM structures of the human GATOR1-Rag-Ragulator complex reveal a spatial-constraint regulated GAP mechanism.</title>
        <authorList>
            <person name="Egri S.B."/>
            <person name="Ouch C."/>
            <person name="Chou H.T."/>
            <person name="Yu Z."/>
            <person name="Song K."/>
            <person name="Xu C."/>
            <person name="Shen K."/>
        </authorList>
    </citation>
    <scope>STRUCTURE BY ELECTRON MICROSCOPY (3.90 ANGSTROMS) IN COMPLEX WITH GDP; RRAGC; DEPDC5; NPRL2; NPRL3; LAMTOR1; LAMTOR2; LAMTOR3; LAMTOR4 AND LAMTOR5</scope>
</reference>
<reference evidence="57" key="33">
    <citation type="journal article" date="2022" name="Sci. Adv.">
        <title>Structural basis for FLCN RagC GAP activation in MiT-TFE substrate-selective mTORC1 regulation.</title>
        <authorList>
            <person name="Jansen R.M."/>
            <person name="Peruzzo R."/>
            <person name="Fromm S.A."/>
            <person name="Yokom A.L."/>
            <person name="Zoncu R."/>
            <person name="Hurley J.H."/>
        </authorList>
    </citation>
    <scope>STRUCTURE BY ELECTRON MICROSCOPY (3.53 ANGSTROMS) IN COMPLEX WITH GDP; RRAGC; LAMTOR1; LAMTOR2; LAMTOR3; LAMTOR4; LAMTOR5; FNIP2; FLCN AND SLC38A9</scope>
</reference>
<reference evidence="54 55 56" key="34">
    <citation type="journal article" date="2023" name="Nature">
        <title>Structure of the lysosomal mTORC1-TFEB-Rag-Ragulator megacomplex.</title>
        <authorList>
            <person name="Cui Z."/>
            <person name="Napolitano G."/>
            <person name="de Araujo M.E.G."/>
            <person name="Esposito A."/>
            <person name="Monfregola J."/>
            <person name="Huber L.A."/>
            <person name="Ballabio A."/>
            <person name="Hurley J.H."/>
        </authorList>
    </citation>
    <scope>STRUCTURE BY ELECTRON MICROSCOPY (2.90 ANGSTROMS) IN COMPLEX WITH GTP; RRAGC; LAMTOR1; LAMTOR2; LAMTOR3; LAMTOR4; LAMTOR5; RPTOR; MLST8; MTOR AND TFEB</scope>
</reference>